<reference key="1">
    <citation type="journal article" date="1999" name="Nature">
        <title>Sequence and analysis of chromosome 2 of the plant Arabidopsis thaliana.</title>
        <authorList>
            <person name="Lin X."/>
            <person name="Kaul S."/>
            <person name="Rounsley S.D."/>
            <person name="Shea T.P."/>
            <person name="Benito M.-I."/>
            <person name="Town C.D."/>
            <person name="Fujii C.Y."/>
            <person name="Mason T.M."/>
            <person name="Bowman C.L."/>
            <person name="Barnstead M.E."/>
            <person name="Feldblyum T.V."/>
            <person name="Buell C.R."/>
            <person name="Ketchum K.A."/>
            <person name="Lee J.J."/>
            <person name="Ronning C.M."/>
            <person name="Koo H.L."/>
            <person name="Moffat K.S."/>
            <person name="Cronin L.A."/>
            <person name="Shen M."/>
            <person name="Pai G."/>
            <person name="Van Aken S."/>
            <person name="Umayam L."/>
            <person name="Tallon L.J."/>
            <person name="Gill J.E."/>
            <person name="Adams M.D."/>
            <person name="Carrera A.J."/>
            <person name="Creasy T.H."/>
            <person name="Goodman H.M."/>
            <person name="Somerville C.R."/>
            <person name="Copenhaver G.P."/>
            <person name="Preuss D."/>
            <person name="Nierman W.C."/>
            <person name="White O."/>
            <person name="Eisen J.A."/>
            <person name="Salzberg S.L."/>
            <person name="Fraser C.M."/>
            <person name="Venter J.C."/>
        </authorList>
    </citation>
    <scope>NUCLEOTIDE SEQUENCE [LARGE SCALE GENOMIC DNA]</scope>
    <source>
        <strain>cv. Columbia</strain>
    </source>
</reference>
<reference key="2">
    <citation type="journal article" date="2017" name="Plant J.">
        <title>Araport11: a complete reannotation of the Arabidopsis thaliana reference genome.</title>
        <authorList>
            <person name="Cheng C.Y."/>
            <person name="Krishnakumar V."/>
            <person name="Chan A.P."/>
            <person name="Thibaud-Nissen F."/>
            <person name="Schobel S."/>
            <person name="Town C.D."/>
        </authorList>
    </citation>
    <scope>GENOME REANNOTATION</scope>
    <source>
        <strain>cv. Columbia</strain>
    </source>
</reference>
<reference key="3">
    <citation type="journal article" date="2002" name="Science">
        <title>Functional annotation of a full-length Arabidopsis cDNA collection.</title>
        <authorList>
            <person name="Seki M."/>
            <person name="Narusaka M."/>
            <person name="Kamiya A."/>
            <person name="Ishida J."/>
            <person name="Satou M."/>
            <person name="Sakurai T."/>
            <person name="Nakajima M."/>
            <person name="Enju A."/>
            <person name="Akiyama K."/>
            <person name="Oono Y."/>
            <person name="Muramatsu M."/>
            <person name="Hayashizaki Y."/>
            <person name="Kawai J."/>
            <person name="Carninci P."/>
            <person name="Itoh M."/>
            <person name="Ishii Y."/>
            <person name="Arakawa T."/>
            <person name="Shibata K."/>
            <person name="Shinagawa A."/>
            <person name="Shinozaki K."/>
        </authorList>
    </citation>
    <scope>NUCLEOTIDE SEQUENCE [LARGE SCALE MRNA]</scope>
    <source>
        <strain>cv. Columbia</strain>
    </source>
</reference>
<reference key="4">
    <citation type="journal article" date="2003" name="Science">
        <title>Empirical analysis of transcriptional activity in the Arabidopsis genome.</title>
        <authorList>
            <person name="Yamada K."/>
            <person name="Lim J."/>
            <person name="Dale J.M."/>
            <person name="Chen H."/>
            <person name="Shinn P."/>
            <person name="Palm C.J."/>
            <person name="Southwick A.M."/>
            <person name="Wu H.C."/>
            <person name="Kim C.J."/>
            <person name="Nguyen M."/>
            <person name="Pham P.K."/>
            <person name="Cheuk R.F."/>
            <person name="Karlin-Newmann G."/>
            <person name="Liu S.X."/>
            <person name="Lam B."/>
            <person name="Sakano H."/>
            <person name="Wu T."/>
            <person name="Yu G."/>
            <person name="Miranda M."/>
            <person name="Quach H.L."/>
            <person name="Tripp M."/>
            <person name="Chang C.H."/>
            <person name="Lee J.M."/>
            <person name="Toriumi M.J."/>
            <person name="Chan M.M."/>
            <person name="Tang C.C."/>
            <person name="Onodera C.S."/>
            <person name="Deng J.M."/>
            <person name="Akiyama K."/>
            <person name="Ansari Y."/>
            <person name="Arakawa T."/>
            <person name="Banh J."/>
            <person name="Banno F."/>
            <person name="Bowser L."/>
            <person name="Brooks S.Y."/>
            <person name="Carninci P."/>
            <person name="Chao Q."/>
            <person name="Choy N."/>
            <person name="Enju A."/>
            <person name="Goldsmith A.D."/>
            <person name="Gurjal M."/>
            <person name="Hansen N.F."/>
            <person name="Hayashizaki Y."/>
            <person name="Johnson-Hopson C."/>
            <person name="Hsuan V.W."/>
            <person name="Iida K."/>
            <person name="Karnes M."/>
            <person name="Khan S."/>
            <person name="Koesema E."/>
            <person name="Ishida J."/>
            <person name="Jiang P.X."/>
            <person name="Jones T."/>
            <person name="Kawai J."/>
            <person name="Kamiya A."/>
            <person name="Meyers C."/>
            <person name="Nakajima M."/>
            <person name="Narusaka M."/>
            <person name="Seki M."/>
            <person name="Sakurai T."/>
            <person name="Satou M."/>
            <person name="Tamse R."/>
            <person name="Vaysberg M."/>
            <person name="Wallender E.K."/>
            <person name="Wong C."/>
            <person name="Yamamura Y."/>
            <person name="Yuan S."/>
            <person name="Shinozaki K."/>
            <person name="Davis R.W."/>
            <person name="Theologis A."/>
            <person name="Ecker J.R."/>
        </authorList>
    </citation>
    <scope>NUCLEOTIDE SEQUENCE [LARGE SCALE MRNA]</scope>
    <source>
        <strain>cv. Columbia</strain>
    </source>
</reference>
<dbReference type="EMBL" id="AC003672">
    <property type="protein sequence ID" value="AAC27465.1"/>
    <property type="molecule type" value="Genomic_DNA"/>
</dbReference>
<dbReference type="EMBL" id="CP002685">
    <property type="protein sequence ID" value="AEC10449.1"/>
    <property type="molecule type" value="Genomic_DNA"/>
</dbReference>
<dbReference type="EMBL" id="AK118305">
    <property type="protein sequence ID" value="BAC42923.1"/>
    <property type="molecule type" value="mRNA"/>
</dbReference>
<dbReference type="EMBL" id="BT005542">
    <property type="protein sequence ID" value="AAO63962.1"/>
    <property type="molecule type" value="mRNA"/>
</dbReference>
<dbReference type="PIR" id="T01590">
    <property type="entry name" value="T01590"/>
</dbReference>
<dbReference type="RefSeq" id="NP_181991.1">
    <property type="nucleotide sequence ID" value="NM_130027.3"/>
</dbReference>
<dbReference type="SMR" id="O80502"/>
<dbReference type="BioGRID" id="4407">
    <property type="interactions" value="1"/>
</dbReference>
<dbReference type="FunCoup" id="O80502">
    <property type="interactions" value="8"/>
</dbReference>
<dbReference type="PaxDb" id="3702-AT2G44630.1"/>
<dbReference type="ProteomicsDB" id="230990"/>
<dbReference type="EnsemblPlants" id="AT2G44630.1">
    <property type="protein sequence ID" value="AT2G44630.1"/>
    <property type="gene ID" value="AT2G44630"/>
</dbReference>
<dbReference type="GeneID" id="819071"/>
<dbReference type="Gramene" id="AT2G44630.1">
    <property type="protein sequence ID" value="AT2G44630.1"/>
    <property type="gene ID" value="AT2G44630"/>
</dbReference>
<dbReference type="KEGG" id="ath:AT2G44630"/>
<dbReference type="Araport" id="AT2G44630"/>
<dbReference type="TAIR" id="AT2G44630"/>
<dbReference type="eggNOG" id="KOG1072">
    <property type="taxonomic scope" value="Eukaryota"/>
</dbReference>
<dbReference type="HOGENOM" id="CLU_032521_0_0_1"/>
<dbReference type="InParanoid" id="O80502"/>
<dbReference type="OMA" id="LPQDIVW"/>
<dbReference type="PhylomeDB" id="O80502"/>
<dbReference type="PRO" id="PR:O80502"/>
<dbReference type="Proteomes" id="UP000006548">
    <property type="component" value="Chromosome 2"/>
</dbReference>
<dbReference type="ExpressionAtlas" id="O80502">
    <property type="expression patterns" value="baseline and differential"/>
</dbReference>
<dbReference type="CDD" id="cd22152">
    <property type="entry name" value="F-box_AtAFR-like"/>
    <property type="match status" value="1"/>
</dbReference>
<dbReference type="Gene3D" id="2.120.10.80">
    <property type="entry name" value="Kelch-type beta propeller"/>
    <property type="match status" value="1"/>
</dbReference>
<dbReference type="InterPro" id="IPR036047">
    <property type="entry name" value="F-box-like_dom_sf"/>
</dbReference>
<dbReference type="InterPro" id="IPR050354">
    <property type="entry name" value="F-box/kelch-repeat_ARATH"/>
</dbReference>
<dbReference type="InterPro" id="IPR001810">
    <property type="entry name" value="F-box_dom"/>
</dbReference>
<dbReference type="InterPro" id="IPR015915">
    <property type="entry name" value="Kelch-typ_b-propeller"/>
</dbReference>
<dbReference type="InterPro" id="IPR006652">
    <property type="entry name" value="Kelch_1"/>
</dbReference>
<dbReference type="PANTHER" id="PTHR24414:SF75">
    <property type="entry name" value="F-BOX DOMAIN-CONTAINING PROTEIN"/>
    <property type="match status" value="1"/>
</dbReference>
<dbReference type="PANTHER" id="PTHR24414">
    <property type="entry name" value="F-BOX/KELCH-REPEAT PROTEIN SKIP4"/>
    <property type="match status" value="1"/>
</dbReference>
<dbReference type="Pfam" id="PF00646">
    <property type="entry name" value="F-box"/>
    <property type="match status" value="1"/>
</dbReference>
<dbReference type="Pfam" id="PF25210">
    <property type="entry name" value="Kelch_FKB95"/>
    <property type="match status" value="1"/>
</dbReference>
<dbReference type="SMART" id="SM00256">
    <property type="entry name" value="FBOX"/>
    <property type="match status" value="1"/>
</dbReference>
<dbReference type="SMART" id="SM00612">
    <property type="entry name" value="Kelch"/>
    <property type="match status" value="2"/>
</dbReference>
<dbReference type="SUPFAM" id="SSF81383">
    <property type="entry name" value="F-box domain"/>
    <property type="match status" value="1"/>
</dbReference>
<dbReference type="SUPFAM" id="SSF117281">
    <property type="entry name" value="Kelch motif"/>
    <property type="match status" value="1"/>
</dbReference>
<protein>
    <recommendedName>
        <fullName>F-box/kelch-repeat protein At2g44630</fullName>
    </recommendedName>
</protein>
<organism>
    <name type="scientific">Arabidopsis thaliana</name>
    <name type="common">Mouse-ear cress</name>
    <dbReference type="NCBI Taxonomy" id="3702"/>
    <lineage>
        <taxon>Eukaryota</taxon>
        <taxon>Viridiplantae</taxon>
        <taxon>Streptophyta</taxon>
        <taxon>Embryophyta</taxon>
        <taxon>Tracheophyta</taxon>
        <taxon>Spermatophyta</taxon>
        <taxon>Magnoliopsida</taxon>
        <taxon>eudicotyledons</taxon>
        <taxon>Gunneridae</taxon>
        <taxon>Pentapetalae</taxon>
        <taxon>rosids</taxon>
        <taxon>malvids</taxon>
        <taxon>Brassicales</taxon>
        <taxon>Brassicaceae</taxon>
        <taxon>Camelineae</taxon>
        <taxon>Arabidopsis</taxon>
    </lineage>
</organism>
<evidence type="ECO:0000256" key="1">
    <source>
        <dbReference type="SAM" id="MobiDB-lite"/>
    </source>
</evidence>
<gene>
    <name type="ordered locus">At2g44630</name>
    <name type="ORF">F16B22.12</name>
</gene>
<keyword id="KW-0880">Kelch repeat</keyword>
<keyword id="KW-1185">Reference proteome</keyword>
<keyword id="KW-0677">Repeat</keyword>
<proteinExistence type="evidence at transcript level"/>
<sequence>MSNADEPPQKTNQPPSSSLTPPSLFSLPVDIVLNILALVPKRYYPILCCVSKSLRSLIRSPEIHKTRSLHGKDSLYLCFSTRTTYPNRNRTTFHWFTLRRNDNKMNTTENVFVSIDVPYRPGHASYPLSNIAIDTEIYCIPGYNFPSSSIVWIFDTQSGQWRQGPSMQVERLSATVGLVGGKIYVIGGNRGEEILAEVFDLKTQTWEAAPIPKAKDRNEWFTHASVSLDRKVYALNSREYMNSYDTRDGSYQRYTIPEDNWWKTGKCVIDNVLFVYFLRFGLMWYDSELMLWRVVYGLDLDKARCIGIGEYYGKLAFIWGKPSNVSESKEIWCRMIGLLRSEVGIHGTEEPSQLLRIVPNNYSLRHCLSLSG</sequence>
<feature type="chain" id="PRO_0000283207" description="F-box/kelch-repeat protein At2g44630">
    <location>
        <begin position="1"/>
        <end position="372"/>
    </location>
</feature>
<feature type="domain" description="F-box">
    <location>
        <begin position="21"/>
        <end position="67"/>
    </location>
</feature>
<feature type="repeat" description="Kelch 1">
    <location>
        <begin position="136"/>
        <end position="181"/>
    </location>
</feature>
<feature type="repeat" description="Kelch 2">
    <location>
        <begin position="183"/>
        <end position="228"/>
    </location>
</feature>
<feature type="region of interest" description="Disordered" evidence="1">
    <location>
        <begin position="1"/>
        <end position="21"/>
    </location>
</feature>
<feature type="compositionally biased region" description="Polar residues" evidence="1">
    <location>
        <begin position="1"/>
        <end position="13"/>
    </location>
</feature>
<name>FBK47_ARATH</name>
<accession>O80502</accession>